<keyword id="KW-0067">ATP-binding</keyword>
<keyword id="KW-0963">Cytoplasm</keyword>
<keyword id="KW-0206">Cytoskeleton</keyword>
<keyword id="KW-0378">Hydrolase</keyword>
<keyword id="KW-0547">Nucleotide-binding</keyword>
<keyword id="KW-1185">Reference proteome</keyword>
<comment type="function">
    <text>Actins are highly conserved proteins that are involved in various types of cell motility and are ubiquitously expressed in all eukaryotic cells.</text>
</comment>
<comment type="catalytic activity">
    <reaction evidence="1">
        <text>ATP + H2O = ADP + phosphate + H(+)</text>
        <dbReference type="Rhea" id="RHEA:13065"/>
        <dbReference type="ChEBI" id="CHEBI:15377"/>
        <dbReference type="ChEBI" id="CHEBI:15378"/>
        <dbReference type="ChEBI" id="CHEBI:30616"/>
        <dbReference type="ChEBI" id="CHEBI:43474"/>
        <dbReference type="ChEBI" id="CHEBI:456216"/>
    </reaction>
</comment>
<comment type="subcellular location">
    <subcellularLocation>
        <location>Cytoplasm</location>
        <location>Cytoskeleton</location>
    </subcellularLocation>
</comment>
<comment type="similarity">
    <text evidence="2">Belongs to the actin family.</text>
</comment>
<feature type="chain" id="PRO_0000088990" description="Actin">
    <location>
        <begin position="1"/>
        <end position="376"/>
    </location>
</feature>
<feature type="sequence conflict" description="In Ref. 1; AAC34678." evidence="2" ref="1">
    <original>E</original>
    <variation>K</variation>
    <location>
        <position position="58"/>
    </location>
</feature>
<feature type="sequence conflict" description="In Ref. 1; AAC34678." evidence="2" ref="1">
    <original>DM</original>
    <variation>NL</variation>
    <location>
        <begin position="82"/>
        <end position="83"/>
    </location>
</feature>
<protein>
    <recommendedName>
        <fullName>Actin</fullName>
        <ecNumber evidence="1">3.6.4.-</ecNumber>
    </recommendedName>
</protein>
<sequence length="376" mass="41703">MDGEDVAALVIDNGSGMCKAGFAGDDAPRAVFPSIVGRPRHQGIMVGMGQKDSYVGDEAQSKRGILTLRYPIEHGIVTNWDDMEKIWHHTFYNELRVAPEEHPVLLTEAPMNPKSNREKMTQILFETFNVPAFYVSIQAVLSLYSSGRTTGIVLDSGDGVTHVVPIYAGFSLPHAILRIDLAGRDLTDYLMKILSERGYTFSTTAEREIVRDIKEKLCYVALDFDQELQTSSQSSAIEKSYELPDGQVITIGNERFRAPEVLFHPGPLGLEAAGIDQTTYNSIIKCDVDVRKELYGNIVMSGGTTMFPGIAERMQKEITALAPSSMKVKIIAPPERKYSVWIGGSILASLSTFQQMWISKQEYDESGPSIVHHKCF</sequence>
<name>ACT_OGAPD</name>
<proteinExistence type="inferred from homology"/>
<evidence type="ECO:0000250" key="1">
    <source>
        <dbReference type="UniProtKB" id="P60010"/>
    </source>
</evidence>
<evidence type="ECO:0000305" key="2"/>
<organism>
    <name type="scientific">Ogataea parapolymorpha (strain ATCC 26012 / BCRC 20466 / JCM 22074 / NRRL Y-7560 / DL-1)</name>
    <name type="common">Yeast</name>
    <name type="synonym">Hansenula polymorpha</name>
    <dbReference type="NCBI Taxonomy" id="871575"/>
    <lineage>
        <taxon>Eukaryota</taxon>
        <taxon>Fungi</taxon>
        <taxon>Dikarya</taxon>
        <taxon>Ascomycota</taxon>
        <taxon>Saccharomycotina</taxon>
        <taxon>Pichiomycetes</taxon>
        <taxon>Pichiales</taxon>
        <taxon>Pichiaceae</taxon>
        <taxon>Ogataea</taxon>
    </lineage>
</organism>
<dbReference type="EC" id="3.6.4.-" evidence="1"/>
<dbReference type="EMBL" id="AF085278">
    <property type="protein sequence ID" value="AAC34678.1"/>
    <property type="molecule type" value="Genomic_DNA"/>
</dbReference>
<dbReference type="EMBL" id="AEOI02000005">
    <property type="protein sequence ID" value="ESX01424.1"/>
    <property type="molecule type" value="Genomic_DNA"/>
</dbReference>
<dbReference type="RefSeq" id="XP_013936258.1">
    <property type="nucleotide sequence ID" value="XM_014080783.1"/>
</dbReference>
<dbReference type="SMR" id="O74258"/>
<dbReference type="STRING" id="871575.O74258"/>
<dbReference type="GeneID" id="25770287"/>
<dbReference type="KEGG" id="opa:HPODL_00818"/>
<dbReference type="eggNOG" id="KOG0676">
    <property type="taxonomic scope" value="Eukaryota"/>
</dbReference>
<dbReference type="HOGENOM" id="CLU_027965_0_2_1"/>
<dbReference type="OMA" id="FHTTAER"/>
<dbReference type="OrthoDB" id="5132116at2759"/>
<dbReference type="Proteomes" id="UP000008673">
    <property type="component" value="Chromosome III"/>
</dbReference>
<dbReference type="GO" id="GO:0005737">
    <property type="term" value="C:cytoplasm"/>
    <property type="evidence" value="ECO:0007669"/>
    <property type="project" value="UniProtKB-KW"/>
</dbReference>
<dbReference type="GO" id="GO:0005856">
    <property type="term" value="C:cytoskeleton"/>
    <property type="evidence" value="ECO:0007669"/>
    <property type="project" value="UniProtKB-SubCell"/>
</dbReference>
<dbReference type="GO" id="GO:0005524">
    <property type="term" value="F:ATP binding"/>
    <property type="evidence" value="ECO:0007669"/>
    <property type="project" value="UniProtKB-KW"/>
</dbReference>
<dbReference type="GO" id="GO:0016787">
    <property type="term" value="F:hydrolase activity"/>
    <property type="evidence" value="ECO:0007669"/>
    <property type="project" value="UniProtKB-KW"/>
</dbReference>
<dbReference type="CDD" id="cd10224">
    <property type="entry name" value="ASKHA_NBD_actin"/>
    <property type="match status" value="1"/>
</dbReference>
<dbReference type="FunFam" id="2.30.36.70:FF:000001">
    <property type="entry name" value="Actin, alpha skeletal muscle"/>
    <property type="match status" value="1"/>
</dbReference>
<dbReference type="FunFam" id="3.30.420.40:FF:000148">
    <property type="entry name" value="Actin, alpha skeletal muscle"/>
    <property type="match status" value="1"/>
</dbReference>
<dbReference type="FunFam" id="3.90.640.10:FF:000001">
    <property type="entry name" value="Actin, muscle"/>
    <property type="match status" value="1"/>
</dbReference>
<dbReference type="FunFam" id="3.30.420.40:FF:000404">
    <property type="entry name" value="Major actin"/>
    <property type="match status" value="1"/>
</dbReference>
<dbReference type="FunFam" id="3.30.420.40:FF:000058">
    <property type="entry name" value="Putative actin-related protein 5"/>
    <property type="match status" value="1"/>
</dbReference>
<dbReference type="Gene3D" id="3.30.420.40">
    <property type="match status" value="2"/>
</dbReference>
<dbReference type="Gene3D" id="3.90.640.10">
    <property type="entry name" value="Actin, Chain A, domain 4"/>
    <property type="match status" value="1"/>
</dbReference>
<dbReference type="InterPro" id="IPR004000">
    <property type="entry name" value="Actin"/>
</dbReference>
<dbReference type="InterPro" id="IPR020902">
    <property type="entry name" value="Actin/actin-like_CS"/>
</dbReference>
<dbReference type="InterPro" id="IPR004001">
    <property type="entry name" value="Actin_CS"/>
</dbReference>
<dbReference type="InterPro" id="IPR043129">
    <property type="entry name" value="ATPase_NBD"/>
</dbReference>
<dbReference type="PANTHER" id="PTHR11937">
    <property type="entry name" value="ACTIN"/>
    <property type="match status" value="1"/>
</dbReference>
<dbReference type="Pfam" id="PF00022">
    <property type="entry name" value="Actin"/>
    <property type="match status" value="1"/>
</dbReference>
<dbReference type="PRINTS" id="PR00190">
    <property type="entry name" value="ACTIN"/>
</dbReference>
<dbReference type="SMART" id="SM00268">
    <property type="entry name" value="ACTIN"/>
    <property type="match status" value="1"/>
</dbReference>
<dbReference type="SUPFAM" id="SSF53067">
    <property type="entry name" value="Actin-like ATPase domain"/>
    <property type="match status" value="2"/>
</dbReference>
<dbReference type="PROSITE" id="PS00406">
    <property type="entry name" value="ACTINS_1"/>
    <property type="match status" value="1"/>
</dbReference>
<dbReference type="PROSITE" id="PS00432">
    <property type="entry name" value="ACTINS_2"/>
    <property type="match status" value="1"/>
</dbReference>
<dbReference type="PROSITE" id="PS01132">
    <property type="entry name" value="ACTINS_ACT_LIKE"/>
    <property type="match status" value="1"/>
</dbReference>
<accession>O74258</accession>
<accession>E7R1T4</accession>
<accession>W1QKS1</accession>
<gene>
    <name type="primary">ACT</name>
    <name type="ORF">HPODL_00818</name>
</gene>
<reference key="1">
    <citation type="journal article" date="2001" name="Appl. Microbiol. Biotechnol.">
        <title>Molecular characterization of the actin-encoding gene and the use of its promoter for a dominant selection system in the methylotrophic yeast Hansenula polymorpha.</title>
        <authorList>
            <person name="Kang H.-A."/>
            <person name="Hong W.-K."/>
            <person name="Sohn J.-H."/>
            <person name="Choi E.-S."/>
            <person name="Rhee S.-K."/>
        </authorList>
    </citation>
    <scope>NUCLEOTIDE SEQUENCE [GENOMIC DNA]</scope>
    <source>
        <strain>ATCC 26012 / BCRC 20466 / JCM 22074 / NRRL Y-7560 / DL-1</strain>
    </source>
</reference>
<reference key="2">
    <citation type="journal article" date="2013" name="BMC Genomics">
        <title>Genome sequence and analysis of methylotrophic yeast Hansenula polymorpha DL1.</title>
        <authorList>
            <person name="Ravin N.V."/>
            <person name="Eldarov M.A."/>
            <person name="Kadnikov V.V."/>
            <person name="Beletsky A.V."/>
            <person name="Schneider J."/>
            <person name="Mardanova E.S."/>
            <person name="Smekalova E.M."/>
            <person name="Zvereva M.I."/>
            <person name="Dontsova O.A."/>
            <person name="Mardanov A.V."/>
            <person name="Skryabin K.G."/>
        </authorList>
    </citation>
    <scope>NUCLEOTIDE SEQUENCE [LARGE SCALE GENOMIC DNA]</scope>
    <source>
        <strain>ATCC 26012 / BCRC 20466 / JCM 22074 / NRRL Y-7560 / DL-1</strain>
    </source>
</reference>